<sequence>MVLSDLDIKEPDSPESGLNGSDDMVREHETESKGNLYSQYEEKVRPCIDLIDSLRALGVEQDLALPAIAVIGDQSSGKSSVLEALSGVALPRGSGIVTRCPLVLRLKKLEKEGEWKGKVSFLDREIEISDASQVEKEISEAQIAIAGEGMGISHELISLEVSSPHVPDLTLIDLPGITRVAVGNQPHDIEYQIKSLIRKYILRQETINLVVVPANVDIATTEALRMAQDVDPQGDRTIGILTKPDLVDKGTEDKVVDVVRNLVFHLKKGYMIVKCRGQQEIQHRLSLDKALQRERIFFEDHTHFRDLLEEGRATIPCLAERLTNELIMHICKTLPLLENQIKETHQRITEELQKYGKDIPEEESEKMFSLIEKIDTFNKEIISTIEGEEHVGQYDSRLFTKVRAEFCKWSAVVEKNFEKGHEAIRKEIKQFENRYRGRELPGFVNYKTFEIIIKKQVIVLEEPAVDMLHTVTDIIRNTFTEVSGKHFSEFFNLHRTAKSKIEDIRLEQENEAEKSIRLHFQMEQLVYCQDQVYRRALQQVREKEAEEEKKKKSNHYYQSEDSEPSTAEIFQHLMAYHQEVSTRISSHIPLIIQFFVLRTYGEQLKKSMLQLLQDKDQYDWLLKERTDTRDKRKFLKERLERLSRARQRLAKFPG</sequence>
<keyword id="KW-0007">Acetylation</keyword>
<keyword id="KW-0963">Cytoplasm</keyword>
<keyword id="KW-0256">Endoplasmic reticulum</keyword>
<keyword id="KW-0342">GTP-binding</keyword>
<keyword id="KW-0391">Immunity</keyword>
<keyword id="KW-0399">Innate immunity</keyword>
<keyword id="KW-0472">Membrane</keyword>
<keyword id="KW-0547">Nucleotide-binding</keyword>
<keyword id="KW-1185">Reference proteome</keyword>
<keyword id="KW-0832">Ubl conjugation</keyword>
<reference key="1">
    <citation type="journal article" date="1993" name="Gene">
        <title>An interferon-induced Mx protein: cDNA sequence and high-level expression in the endometrium of pregnant sheep.</title>
        <authorList>
            <person name="Charleston B."/>
            <person name="Stewart H.J."/>
        </authorList>
    </citation>
    <scope>NUCLEOTIDE SEQUENCE [MRNA]</scope>
    <scope>INDUCTION</scope>
    <source>
        <tissue>Endometrium</tissue>
    </source>
</reference>
<reference key="2">
    <citation type="journal article" date="2002" name="Glia">
        <title>Oligodendrocytes express an alpha/beta-interferon-susceptible Mx gene: molecular characterization of the encoded protein.</title>
        <authorList>
            <person name="Szuchet S."/>
            <person name="Plachetzki D.C."/>
            <person name="Karialukas R."/>
        </authorList>
    </citation>
    <scope>NUCLEOTIDE SEQUENCE [MRNA]</scope>
</reference>
<reference key="3">
    <citation type="journal article" date="2007" name="Microbes Infect.">
        <title>The Mx GTPase family of interferon-induced antiviral proteins.</title>
        <authorList>
            <person name="Haller O."/>
            <person name="Stertz S."/>
            <person name="Kochs G."/>
        </authorList>
    </citation>
    <scope>REVIEW</scope>
    <scope>INDUCTION</scope>
</reference>
<reference key="4">
    <citation type="journal article" date="2011" name="Am. J. Reprod. Immunol.">
        <title>The myxovirus resistance protein, MX1, interacts with tubulin beta in uterine glandular epithelial cells.</title>
        <authorList>
            <person name="Racicot K."/>
            <person name="Ott T."/>
        </authorList>
    </citation>
    <scope>INTERACTION WITH TUBB</scope>
</reference>
<proteinExistence type="evidence at protein level"/>
<feature type="chain" id="PRO_0000206596" description="Interferon-induced GTP-binding protein Mx1">
    <location>
        <begin position="1"/>
        <end position="654"/>
    </location>
</feature>
<feature type="domain" description="Dynamin-type G" evidence="5">
    <location>
        <begin position="62"/>
        <end position="335"/>
    </location>
</feature>
<feature type="domain" description="GED" evidence="4">
    <location>
        <begin position="566"/>
        <end position="654"/>
    </location>
</feature>
<feature type="region of interest" description="Disordered" evidence="6">
    <location>
        <begin position="1"/>
        <end position="33"/>
    </location>
</feature>
<feature type="region of interest" description="G1 motif" evidence="5">
    <location>
        <begin position="72"/>
        <end position="79"/>
    </location>
</feature>
<feature type="region of interest" description="G2 motif" evidence="5">
    <location>
        <begin position="97"/>
        <end position="99"/>
    </location>
</feature>
<feature type="region of interest" description="G3 motif" evidence="5">
    <location>
        <begin position="173"/>
        <end position="176"/>
    </location>
</feature>
<feature type="region of interest" description="G4 motif" evidence="5">
    <location>
        <begin position="242"/>
        <end position="245"/>
    </location>
</feature>
<feature type="region of interest" description="G5 motif" evidence="5">
    <location>
        <begin position="274"/>
        <end position="277"/>
    </location>
</feature>
<feature type="region of interest" description="Bundle signaling element (BSE)" evidence="1">
    <location>
        <begin position="336"/>
        <end position="361"/>
    </location>
</feature>
<feature type="region of interest" description="Middle domain" evidence="1">
    <location>
        <begin position="361"/>
        <end position="528"/>
    </location>
</feature>
<feature type="region of interest" description="Stalk" evidence="1">
    <location>
        <begin position="362"/>
        <end position="624"/>
    </location>
</feature>
<feature type="region of interest" description="Disordered" evidence="6">
    <location>
        <begin position="544"/>
        <end position="563"/>
    </location>
</feature>
<feature type="region of interest" description="Critical for lipid-binding" evidence="1">
    <location>
        <begin position="549"/>
        <end position="552"/>
    </location>
</feature>
<feature type="compositionally biased region" description="Basic and acidic residues" evidence="6">
    <location>
        <begin position="1"/>
        <end position="12"/>
    </location>
</feature>
<feature type="compositionally biased region" description="Basic and acidic residues" evidence="6">
    <location>
        <begin position="23"/>
        <end position="32"/>
    </location>
</feature>
<feature type="binding site" evidence="3">
    <location>
        <begin position="72"/>
        <end position="79"/>
    </location>
    <ligand>
        <name>GTP</name>
        <dbReference type="ChEBI" id="CHEBI:37565"/>
    </ligand>
</feature>
<feature type="binding site" evidence="3">
    <location>
        <begin position="173"/>
        <end position="177"/>
    </location>
    <ligand>
        <name>GTP</name>
        <dbReference type="ChEBI" id="CHEBI:37565"/>
    </ligand>
</feature>
<feature type="binding site" evidence="3">
    <location>
        <begin position="242"/>
        <end position="245"/>
    </location>
    <ligand>
        <name>GTP</name>
        <dbReference type="ChEBI" id="CHEBI:37565"/>
    </ligand>
</feature>
<feature type="modified residue" description="N-acetylmethionine" evidence="2">
    <location>
        <position position="1"/>
    </location>
</feature>
<feature type="sequence conflict" description="In Ref. 2; AAK94466." evidence="10" ref="2">
    <original>R</original>
    <variation>L</variation>
    <location>
        <position position="45"/>
    </location>
</feature>
<feature type="sequence conflict" description="In Ref. 2; AAK94466." evidence="10" ref="2">
    <original>C</original>
    <variation>S</variation>
    <location>
        <position position="275"/>
    </location>
</feature>
<feature type="sequence conflict" description="In Ref. 2; AAK94466." evidence="10" ref="2">
    <original>F</original>
    <variation>I</variation>
    <location>
        <position position="297"/>
    </location>
</feature>
<feature type="sequence conflict" description="In Ref. 2; AAK94466." evidence="10" ref="2">
    <original>L</original>
    <variation>F</variation>
    <location>
        <position position="352"/>
    </location>
</feature>
<feature type="sequence conflict" description="In Ref. 2; AAK94466." evidence="10" ref="2">
    <original>H</original>
    <variation>L</variation>
    <location>
        <position position="390"/>
    </location>
</feature>
<feature type="sequence conflict" description="In Ref. 2; AAK94466." evidence="10" ref="2">
    <original>S</original>
    <variation>K</variation>
    <location>
        <position position="553"/>
    </location>
</feature>
<organism>
    <name type="scientific">Ovis aries</name>
    <name type="common">Sheep</name>
    <dbReference type="NCBI Taxonomy" id="9940"/>
    <lineage>
        <taxon>Eukaryota</taxon>
        <taxon>Metazoa</taxon>
        <taxon>Chordata</taxon>
        <taxon>Craniata</taxon>
        <taxon>Vertebrata</taxon>
        <taxon>Euteleostomi</taxon>
        <taxon>Mammalia</taxon>
        <taxon>Eutheria</taxon>
        <taxon>Laurasiatheria</taxon>
        <taxon>Artiodactyla</taxon>
        <taxon>Ruminantia</taxon>
        <taxon>Pecora</taxon>
        <taxon>Bovidae</taxon>
        <taxon>Caprinae</taxon>
        <taxon>Ovis</taxon>
    </lineage>
</organism>
<comment type="function">
    <text evidence="1">Interferon-induced dynamin-like GTPase with antiviral activity.</text>
</comment>
<comment type="subunit">
    <text evidence="1 8">Homooligomer. Oligomerizes into multimeric filamentous or ring-like structures by virtue of its stalk domain. Oligomerization is critical for GTPase activity, protein stability, and recognition of viral target structures (By similarity). Interacts with TRPC1, TRPC3, TRPC4, TRPC5, TRPC6 and TRPC7 (By similarity). Interacts with HSPA5 (By similarity). Interacts with DDX39A and DDX39B (By similarity). Interacts with TUBB/TUBB5.</text>
</comment>
<comment type="subcellular location">
    <subcellularLocation>
        <location evidence="2">Cytoplasm</location>
    </subcellularLocation>
    <subcellularLocation>
        <location evidence="2">Endoplasmic reticulum membrane</location>
        <topology evidence="2">Peripheral membrane protein</topology>
        <orientation evidence="2">Cytoplasmic side</orientation>
    </subcellularLocation>
    <subcellularLocation>
        <location evidence="2">Cytoplasm</location>
        <location evidence="2">Perinuclear region</location>
    </subcellularLocation>
    <text evidence="2">Binds preferentially to negatively charged phospholipids.</text>
</comment>
<comment type="induction">
    <text evidence="7 9">By type I and type III interferons.</text>
</comment>
<comment type="domain">
    <text evidence="1">The C-terminal GTPase effector domain (GED) is involved in oligomerization and viral target recognition.</text>
</comment>
<comment type="domain">
    <text evidence="1">The middle domain mediates self-assembly and oligomerization.</text>
</comment>
<comment type="PTM">
    <text evidence="1">ISGylated.</text>
</comment>
<comment type="similarity">
    <text evidence="5">Belongs to the TRAFAC class dynamin-like GTPase superfamily. Dynamin/Fzo/YdjA family.</text>
</comment>
<evidence type="ECO:0000250" key="1"/>
<evidence type="ECO:0000250" key="2">
    <source>
        <dbReference type="UniProtKB" id="P20591"/>
    </source>
</evidence>
<evidence type="ECO:0000255" key="3"/>
<evidence type="ECO:0000255" key="4">
    <source>
        <dbReference type="PROSITE-ProRule" id="PRU00720"/>
    </source>
</evidence>
<evidence type="ECO:0000255" key="5">
    <source>
        <dbReference type="PROSITE-ProRule" id="PRU01055"/>
    </source>
</evidence>
<evidence type="ECO:0000256" key="6">
    <source>
        <dbReference type="SAM" id="MobiDB-lite"/>
    </source>
</evidence>
<evidence type="ECO:0000269" key="7">
    <source>
    </source>
</evidence>
<evidence type="ECO:0000269" key="8">
    <source>
    </source>
</evidence>
<evidence type="ECO:0000269" key="9">
    <source>
    </source>
</evidence>
<evidence type="ECO:0000305" key="10"/>
<accession>P33237</accession>
<accession>Q95MD4</accession>
<name>MX1_SHEEP</name>
<gene>
    <name type="primary">MX1</name>
    <name type="synonym">MX</name>
</gene>
<protein>
    <recommendedName>
        <fullName>Interferon-induced GTP-binding protein Mx1</fullName>
    </recommendedName>
    <alternativeName>
        <fullName>Myxoma resistance protein 1</fullName>
    </alternativeName>
    <alternativeName>
        <fullName>Myxovirus resistance protein 1</fullName>
    </alternativeName>
    <alternativeName>
        <fullName>Oligodendrocyte GTP-binding protein</fullName>
    </alternativeName>
</protein>
<dbReference type="EMBL" id="X66093">
    <property type="protein sequence ID" value="CAA46888.1"/>
    <property type="molecule type" value="mRNA"/>
</dbReference>
<dbReference type="EMBL" id="AF399856">
    <property type="protein sequence ID" value="AAK94466.1"/>
    <property type="molecule type" value="mRNA"/>
</dbReference>
<dbReference type="PIR" id="S21552">
    <property type="entry name" value="S21552"/>
</dbReference>
<dbReference type="RefSeq" id="NP_001009753.1">
    <property type="nucleotide sequence ID" value="NM_001009753.1"/>
</dbReference>
<dbReference type="SMR" id="P33237"/>
<dbReference type="STRING" id="9940.ENSOARP00000011035"/>
<dbReference type="PaxDb" id="9940-ENSOARP00000011035"/>
<dbReference type="GeneID" id="443146"/>
<dbReference type="KEGG" id="oas:443146"/>
<dbReference type="CTD" id="4599"/>
<dbReference type="eggNOG" id="KOG0446">
    <property type="taxonomic scope" value="Eukaryota"/>
</dbReference>
<dbReference type="OrthoDB" id="5061070at2759"/>
<dbReference type="Proteomes" id="UP000002356">
    <property type="component" value="Unplaced"/>
</dbReference>
<dbReference type="GO" id="GO:0005737">
    <property type="term" value="C:cytoplasm"/>
    <property type="evidence" value="ECO:0000250"/>
    <property type="project" value="UniProtKB"/>
</dbReference>
<dbReference type="GO" id="GO:0005789">
    <property type="term" value="C:endoplasmic reticulum membrane"/>
    <property type="evidence" value="ECO:0007669"/>
    <property type="project" value="UniProtKB-SubCell"/>
</dbReference>
<dbReference type="GO" id="GO:0005874">
    <property type="term" value="C:microtubule"/>
    <property type="evidence" value="ECO:0007669"/>
    <property type="project" value="TreeGrafter"/>
</dbReference>
<dbReference type="GO" id="GO:0005634">
    <property type="term" value="C:nucleus"/>
    <property type="evidence" value="ECO:0007669"/>
    <property type="project" value="TreeGrafter"/>
</dbReference>
<dbReference type="GO" id="GO:0048471">
    <property type="term" value="C:perinuclear region of cytoplasm"/>
    <property type="evidence" value="ECO:0007669"/>
    <property type="project" value="UniProtKB-SubCell"/>
</dbReference>
<dbReference type="GO" id="GO:0005886">
    <property type="term" value="C:plasma membrane"/>
    <property type="evidence" value="ECO:0007669"/>
    <property type="project" value="TreeGrafter"/>
</dbReference>
<dbReference type="GO" id="GO:0098793">
    <property type="term" value="C:presynapse"/>
    <property type="evidence" value="ECO:0007669"/>
    <property type="project" value="GOC"/>
</dbReference>
<dbReference type="GO" id="GO:0005525">
    <property type="term" value="F:GTP binding"/>
    <property type="evidence" value="ECO:0007669"/>
    <property type="project" value="UniProtKB-KW"/>
</dbReference>
<dbReference type="GO" id="GO:0003924">
    <property type="term" value="F:GTPase activity"/>
    <property type="evidence" value="ECO:0007669"/>
    <property type="project" value="InterPro"/>
</dbReference>
<dbReference type="GO" id="GO:0008017">
    <property type="term" value="F:microtubule binding"/>
    <property type="evidence" value="ECO:0007669"/>
    <property type="project" value="TreeGrafter"/>
</dbReference>
<dbReference type="GO" id="GO:0051607">
    <property type="term" value="P:defense response to virus"/>
    <property type="evidence" value="ECO:0007669"/>
    <property type="project" value="TreeGrafter"/>
</dbReference>
<dbReference type="GO" id="GO:0045087">
    <property type="term" value="P:innate immune response"/>
    <property type="evidence" value="ECO:0007669"/>
    <property type="project" value="UniProtKB-KW"/>
</dbReference>
<dbReference type="GO" id="GO:0031623">
    <property type="term" value="P:receptor internalization"/>
    <property type="evidence" value="ECO:0007669"/>
    <property type="project" value="TreeGrafter"/>
</dbReference>
<dbReference type="GO" id="GO:0016185">
    <property type="term" value="P:synaptic vesicle budding from presynaptic endocytic zone membrane"/>
    <property type="evidence" value="ECO:0007669"/>
    <property type="project" value="TreeGrafter"/>
</dbReference>
<dbReference type="CDD" id="cd08771">
    <property type="entry name" value="DLP_1"/>
    <property type="match status" value="1"/>
</dbReference>
<dbReference type="FunFam" id="1.20.120.1240:FF:000007">
    <property type="entry name" value="Interferon-induced GTP-binding protein Mx1"/>
    <property type="match status" value="1"/>
</dbReference>
<dbReference type="FunFam" id="3.40.50.300:FF:000621">
    <property type="entry name" value="Interferon-induced GTP-binding protein Mx1"/>
    <property type="match status" value="1"/>
</dbReference>
<dbReference type="Gene3D" id="1.20.120.1240">
    <property type="entry name" value="Dynamin, middle domain"/>
    <property type="match status" value="1"/>
</dbReference>
<dbReference type="Gene3D" id="3.40.50.300">
    <property type="entry name" value="P-loop containing nucleotide triphosphate hydrolases"/>
    <property type="match status" value="1"/>
</dbReference>
<dbReference type="InterPro" id="IPR022812">
    <property type="entry name" value="Dynamin"/>
</dbReference>
<dbReference type="InterPro" id="IPR001401">
    <property type="entry name" value="Dynamin_GTPase"/>
</dbReference>
<dbReference type="InterPro" id="IPR019762">
    <property type="entry name" value="Dynamin_GTPase_CS"/>
</dbReference>
<dbReference type="InterPro" id="IPR045063">
    <property type="entry name" value="Dynamin_N"/>
</dbReference>
<dbReference type="InterPro" id="IPR000375">
    <property type="entry name" value="Dynamin_stalk"/>
</dbReference>
<dbReference type="InterPro" id="IPR030381">
    <property type="entry name" value="G_DYNAMIN_dom"/>
</dbReference>
<dbReference type="InterPro" id="IPR003130">
    <property type="entry name" value="GED"/>
</dbReference>
<dbReference type="InterPro" id="IPR020850">
    <property type="entry name" value="GED_dom"/>
</dbReference>
<dbReference type="InterPro" id="IPR027417">
    <property type="entry name" value="P-loop_NTPase"/>
</dbReference>
<dbReference type="PANTHER" id="PTHR11566">
    <property type="entry name" value="DYNAMIN"/>
    <property type="match status" value="1"/>
</dbReference>
<dbReference type="PANTHER" id="PTHR11566:SF217">
    <property type="entry name" value="INTERFERON-INDUCED GTP-BINDING PROTEIN MX1"/>
    <property type="match status" value="1"/>
</dbReference>
<dbReference type="Pfam" id="PF01031">
    <property type="entry name" value="Dynamin_M"/>
    <property type="match status" value="1"/>
</dbReference>
<dbReference type="Pfam" id="PF00350">
    <property type="entry name" value="Dynamin_N"/>
    <property type="match status" value="1"/>
</dbReference>
<dbReference type="Pfam" id="PF02212">
    <property type="entry name" value="GED"/>
    <property type="match status" value="1"/>
</dbReference>
<dbReference type="PRINTS" id="PR00195">
    <property type="entry name" value="DYNAMIN"/>
</dbReference>
<dbReference type="SMART" id="SM00053">
    <property type="entry name" value="DYNc"/>
    <property type="match status" value="1"/>
</dbReference>
<dbReference type="SMART" id="SM00302">
    <property type="entry name" value="GED"/>
    <property type="match status" value="1"/>
</dbReference>
<dbReference type="SUPFAM" id="SSF52540">
    <property type="entry name" value="P-loop containing nucleoside triphosphate hydrolases"/>
    <property type="match status" value="1"/>
</dbReference>
<dbReference type="PROSITE" id="PS00410">
    <property type="entry name" value="G_DYNAMIN_1"/>
    <property type="match status" value="1"/>
</dbReference>
<dbReference type="PROSITE" id="PS51718">
    <property type="entry name" value="G_DYNAMIN_2"/>
    <property type="match status" value="1"/>
</dbReference>
<dbReference type="PROSITE" id="PS51388">
    <property type="entry name" value="GED"/>
    <property type="match status" value="1"/>
</dbReference>